<name>RBSD_STAA1</name>
<dbReference type="EC" id="5.4.99.62" evidence="1"/>
<dbReference type="EMBL" id="AP009324">
    <property type="protein sequence ID" value="BAF77151.1"/>
    <property type="molecule type" value="Genomic_DNA"/>
</dbReference>
<dbReference type="RefSeq" id="WP_000747873.1">
    <property type="nucleotide sequence ID" value="NZ_CTYB01000042.1"/>
</dbReference>
<dbReference type="SMR" id="A7WXT5"/>
<dbReference type="KEGG" id="saw:SAHV_0268"/>
<dbReference type="HOGENOM" id="CLU_135498_0_0_9"/>
<dbReference type="UniPathway" id="UPA00916">
    <property type="reaction ID" value="UER00888"/>
</dbReference>
<dbReference type="GO" id="GO:0005829">
    <property type="term" value="C:cytosol"/>
    <property type="evidence" value="ECO:0007669"/>
    <property type="project" value="TreeGrafter"/>
</dbReference>
<dbReference type="GO" id="GO:0062193">
    <property type="term" value="F:D-ribose pyranase activity"/>
    <property type="evidence" value="ECO:0007669"/>
    <property type="project" value="UniProtKB-EC"/>
</dbReference>
<dbReference type="GO" id="GO:0016872">
    <property type="term" value="F:intramolecular lyase activity"/>
    <property type="evidence" value="ECO:0007669"/>
    <property type="project" value="UniProtKB-UniRule"/>
</dbReference>
<dbReference type="GO" id="GO:0048029">
    <property type="term" value="F:monosaccharide binding"/>
    <property type="evidence" value="ECO:0007669"/>
    <property type="project" value="InterPro"/>
</dbReference>
<dbReference type="GO" id="GO:0019303">
    <property type="term" value="P:D-ribose catabolic process"/>
    <property type="evidence" value="ECO:0007669"/>
    <property type="project" value="UniProtKB-UniRule"/>
</dbReference>
<dbReference type="FunFam" id="3.40.1650.10:FF:000004">
    <property type="entry name" value="D-ribose pyranase"/>
    <property type="match status" value="1"/>
</dbReference>
<dbReference type="Gene3D" id="3.40.1650.10">
    <property type="entry name" value="RbsD-like domain"/>
    <property type="match status" value="1"/>
</dbReference>
<dbReference type="HAMAP" id="MF_01661">
    <property type="entry name" value="D_rib_pyranase"/>
    <property type="match status" value="1"/>
</dbReference>
<dbReference type="InterPro" id="IPR023064">
    <property type="entry name" value="D-ribose_pyranase"/>
</dbReference>
<dbReference type="InterPro" id="IPR023750">
    <property type="entry name" value="RbsD-like_sf"/>
</dbReference>
<dbReference type="InterPro" id="IPR007721">
    <property type="entry name" value="RbsD_FucU"/>
</dbReference>
<dbReference type="NCBIfam" id="NF008761">
    <property type="entry name" value="PRK11797.1"/>
    <property type="match status" value="1"/>
</dbReference>
<dbReference type="PANTHER" id="PTHR37831">
    <property type="entry name" value="D-RIBOSE PYRANASE"/>
    <property type="match status" value="1"/>
</dbReference>
<dbReference type="PANTHER" id="PTHR37831:SF1">
    <property type="entry name" value="D-RIBOSE PYRANASE"/>
    <property type="match status" value="1"/>
</dbReference>
<dbReference type="Pfam" id="PF05025">
    <property type="entry name" value="RbsD_FucU"/>
    <property type="match status" value="1"/>
</dbReference>
<dbReference type="SUPFAM" id="SSF102546">
    <property type="entry name" value="RbsD-like"/>
    <property type="match status" value="1"/>
</dbReference>
<sequence>MKKSAVLNEHISKAIATIGHFDLLTINDAGMPIPNDHRRIDLAVTKNLPRFIDVLATVLEEMEIQKIYLAEEIKEHNPTQLQQIKQLISSEIEIIFIPHEEMKSNLAHPLNKGNIRTGETTPYSNIALESNVTF</sequence>
<gene>
    <name evidence="1" type="primary">rbsD</name>
    <name type="ordered locus">SAHV_0268</name>
</gene>
<comment type="function">
    <text evidence="1">Catalyzes the interconversion of beta-pyran and beta-furan forms of D-ribose.</text>
</comment>
<comment type="catalytic activity">
    <reaction evidence="1">
        <text>beta-D-ribopyranose = beta-D-ribofuranose</text>
        <dbReference type="Rhea" id="RHEA:25432"/>
        <dbReference type="ChEBI" id="CHEBI:27476"/>
        <dbReference type="ChEBI" id="CHEBI:47002"/>
        <dbReference type="EC" id="5.4.99.62"/>
    </reaction>
</comment>
<comment type="pathway">
    <text evidence="1">Carbohydrate metabolism; D-ribose degradation; D-ribose 5-phosphate from beta-D-ribopyranose: step 1/2.</text>
</comment>
<comment type="subunit">
    <text evidence="1">Homodecamer.</text>
</comment>
<comment type="subcellular location">
    <subcellularLocation>
        <location evidence="1">Cytoplasm</location>
    </subcellularLocation>
</comment>
<comment type="similarity">
    <text evidence="1">Belongs to the RbsD / FucU family. RbsD subfamily.</text>
</comment>
<accession>A7WXT5</accession>
<organism>
    <name type="scientific">Staphylococcus aureus (strain Mu3 / ATCC 700698)</name>
    <dbReference type="NCBI Taxonomy" id="418127"/>
    <lineage>
        <taxon>Bacteria</taxon>
        <taxon>Bacillati</taxon>
        <taxon>Bacillota</taxon>
        <taxon>Bacilli</taxon>
        <taxon>Bacillales</taxon>
        <taxon>Staphylococcaceae</taxon>
        <taxon>Staphylococcus</taxon>
    </lineage>
</organism>
<keyword id="KW-0119">Carbohydrate metabolism</keyword>
<keyword id="KW-0963">Cytoplasm</keyword>
<keyword id="KW-0413">Isomerase</keyword>
<protein>
    <recommendedName>
        <fullName evidence="1">D-ribose pyranase</fullName>
        <ecNumber evidence="1">5.4.99.62</ecNumber>
    </recommendedName>
</protein>
<reference key="1">
    <citation type="journal article" date="2008" name="Antimicrob. Agents Chemother.">
        <title>Mutated response regulator graR is responsible for phenotypic conversion of Staphylococcus aureus from heterogeneous vancomycin-intermediate resistance to vancomycin-intermediate resistance.</title>
        <authorList>
            <person name="Neoh H.-M."/>
            <person name="Cui L."/>
            <person name="Yuzawa H."/>
            <person name="Takeuchi F."/>
            <person name="Matsuo M."/>
            <person name="Hiramatsu K."/>
        </authorList>
    </citation>
    <scope>NUCLEOTIDE SEQUENCE [LARGE SCALE GENOMIC DNA]</scope>
    <source>
        <strain>Mu3 / ATCC 700698</strain>
    </source>
</reference>
<proteinExistence type="inferred from homology"/>
<feature type="chain" id="PRO_0000346267" description="D-ribose pyranase">
    <location>
        <begin position="1"/>
        <end position="134"/>
    </location>
</feature>
<feature type="active site" description="Proton donor" evidence="1">
    <location>
        <position position="20"/>
    </location>
</feature>
<feature type="binding site" evidence="1">
    <location>
        <position position="28"/>
    </location>
    <ligand>
        <name>substrate</name>
    </ligand>
</feature>
<feature type="binding site" evidence="1">
    <location>
        <position position="99"/>
    </location>
    <ligand>
        <name>substrate</name>
    </ligand>
</feature>
<feature type="binding site" evidence="1">
    <location>
        <begin position="123"/>
        <end position="125"/>
    </location>
    <ligand>
        <name>substrate</name>
    </ligand>
</feature>
<evidence type="ECO:0000255" key="1">
    <source>
        <dbReference type="HAMAP-Rule" id="MF_01661"/>
    </source>
</evidence>